<organism>
    <name type="scientific">Buchnera aphidicola subsp. Schizaphis graminum (strain Sg)</name>
    <dbReference type="NCBI Taxonomy" id="198804"/>
    <lineage>
        <taxon>Bacteria</taxon>
        <taxon>Pseudomonadati</taxon>
        <taxon>Pseudomonadota</taxon>
        <taxon>Gammaproteobacteria</taxon>
        <taxon>Enterobacterales</taxon>
        <taxon>Erwiniaceae</taxon>
        <taxon>Buchnera</taxon>
    </lineage>
</organism>
<comment type="function">
    <text evidence="1">Catalyzes the transfer of the alpha-amino group from S-adenosyl-L-methionine (SAM) to 7-keto-8-aminopelargonic acid (KAPA) to form 7,8-diaminopelargonic acid (DAPA). It is the only aminotransferase known to utilize SAM as an amino donor.</text>
</comment>
<comment type="catalytic activity">
    <reaction evidence="1">
        <text>(8S)-8-amino-7-oxononanoate + S-adenosyl-L-methionine = S-adenosyl-4-methylsulfanyl-2-oxobutanoate + (7R,8S)-7,8-diammoniononanoate</text>
        <dbReference type="Rhea" id="RHEA:16861"/>
        <dbReference type="ChEBI" id="CHEBI:16490"/>
        <dbReference type="ChEBI" id="CHEBI:59789"/>
        <dbReference type="ChEBI" id="CHEBI:149468"/>
        <dbReference type="ChEBI" id="CHEBI:149469"/>
        <dbReference type="EC" id="2.6.1.62"/>
    </reaction>
</comment>
<comment type="cofactor">
    <cofactor evidence="1">
        <name>pyridoxal 5'-phosphate</name>
        <dbReference type="ChEBI" id="CHEBI:597326"/>
    </cofactor>
</comment>
<comment type="pathway">
    <text evidence="1">Cofactor biosynthesis; biotin biosynthesis; 7,8-diaminononanoate from 8-amino-7-oxononanoate (SAM route): step 1/1.</text>
</comment>
<comment type="subunit">
    <text evidence="1">Homodimer.</text>
</comment>
<comment type="subcellular location">
    <subcellularLocation>
        <location evidence="1">Cytoplasm</location>
    </subcellularLocation>
</comment>
<comment type="similarity">
    <text evidence="1">Belongs to the class-III pyridoxal-phosphate-dependent aminotransferase family. BioA subfamily.</text>
</comment>
<reference key="1">
    <citation type="journal article" date="2002" name="Science">
        <title>50 million years of genomic stasis in endosymbiotic bacteria.</title>
        <authorList>
            <person name="Tamas I."/>
            <person name="Klasson L."/>
            <person name="Canbaeck B."/>
            <person name="Naeslund A.K."/>
            <person name="Eriksson A.-S."/>
            <person name="Wernegreen J.J."/>
            <person name="Sandstroem J.P."/>
            <person name="Moran N.A."/>
            <person name="Andersson S.G.E."/>
        </authorList>
    </citation>
    <scope>NUCLEOTIDE SEQUENCE [LARGE SCALE GENOMIC DNA]</scope>
    <source>
        <strain>Sg</strain>
    </source>
</reference>
<name>BIOA_BUCAP</name>
<protein>
    <recommendedName>
        <fullName evidence="1">Adenosylmethionine-8-amino-7-oxononanoate aminotransferase</fullName>
        <ecNumber evidence="1">2.6.1.62</ecNumber>
    </recommendedName>
    <alternativeName>
        <fullName evidence="1">7,8-diamino-pelargonic acid aminotransferase</fullName>
        <shortName evidence="1">DAPA AT</shortName>
        <shortName evidence="1">DAPA aminotransferase</shortName>
    </alternativeName>
    <alternativeName>
        <fullName evidence="1">7,8-diaminononanoate synthase</fullName>
        <shortName evidence="1">DANS</shortName>
    </alternativeName>
    <alternativeName>
        <fullName evidence="1">Diaminopelargonic acid synthase</fullName>
    </alternativeName>
</protein>
<keyword id="KW-0032">Aminotransferase</keyword>
<keyword id="KW-0093">Biotin biosynthesis</keyword>
<keyword id="KW-0963">Cytoplasm</keyword>
<keyword id="KW-0663">Pyridoxal phosphate</keyword>
<keyword id="KW-0949">S-adenosyl-L-methionine</keyword>
<keyword id="KW-0808">Transferase</keyword>
<proteinExistence type="inferred from homology"/>
<accession>Q8K9P0</accession>
<sequence length="432" mass="48742">MSQSDIFFDHKHIWHPYSSMVNPLPCYSVISAKGVYLKLKNGKNIIDGMSSWWSTIHGYNHPILNKSLKKQIRKMSHVMFGGITHPSAILLCRKLLKLTPKKLDCVFLSDSGSIAIEVAIKMLIQYWEALGQKRTQILTIKNGYHGDTFSAMSISDPNNSMHKIYNKFLPKNLFAETPTSSFHKEWNSIDIQSFKKIIEKKSKKIAGVILEPIVQGVGGMNFYHPTYLKEIKKLCKAYSIPLVFDEIATGFGRTGKFFAFQHANVIPDILCLGKAMTGGTITLAATLTSRNIAHTISSSKVSCFMHGPTYMGNPLACAVANANIKILEKNEWKKQVINIEKQLCQSLLPLIHHPRVVDVRVLGAIGVVECFHFVNMALIQKFFVKNGVWIRPFKKIIYIVPPYIISMNCLKKLINVIEKSLDNDTLFNVENI</sequence>
<evidence type="ECO:0000255" key="1">
    <source>
        <dbReference type="HAMAP-Rule" id="MF_00834"/>
    </source>
</evidence>
<gene>
    <name evidence="1" type="primary">bioA</name>
    <name type="ordered locus">BUsg_281</name>
</gene>
<feature type="chain" id="PRO_0000120363" description="Adenosylmethionine-8-amino-7-oxononanoate aminotransferase">
    <location>
        <begin position="1"/>
        <end position="432"/>
    </location>
</feature>
<feature type="binding site" evidence="1">
    <location>
        <position position="52"/>
    </location>
    <ligand>
        <name>substrate</name>
    </ligand>
</feature>
<feature type="binding site" evidence="1">
    <location>
        <begin position="112"/>
        <end position="113"/>
    </location>
    <ligand>
        <name>pyridoxal 5'-phosphate</name>
        <dbReference type="ChEBI" id="CHEBI:597326"/>
    </ligand>
</feature>
<feature type="binding site" evidence="1">
    <location>
        <position position="144"/>
    </location>
    <ligand>
        <name>substrate</name>
    </ligand>
</feature>
<feature type="binding site" evidence="1">
    <location>
        <position position="245"/>
    </location>
    <ligand>
        <name>pyridoxal 5'-phosphate</name>
        <dbReference type="ChEBI" id="CHEBI:597326"/>
    </ligand>
</feature>
<feature type="binding site" evidence="1">
    <location>
        <position position="274"/>
    </location>
    <ligand>
        <name>substrate</name>
    </ligand>
</feature>
<feature type="binding site" evidence="1">
    <location>
        <position position="307"/>
    </location>
    <ligand>
        <name>substrate</name>
    </ligand>
</feature>
<feature type="binding site" evidence="1">
    <location>
        <begin position="308"/>
        <end position="309"/>
    </location>
    <ligand>
        <name>pyridoxal 5'-phosphate</name>
        <dbReference type="ChEBI" id="CHEBI:597326"/>
    </ligand>
</feature>
<feature type="binding site" evidence="1">
    <location>
        <position position="391"/>
    </location>
    <ligand>
        <name>substrate</name>
    </ligand>
</feature>
<feature type="site" description="Participates in the substrate recognition with KAPA and in a stacking interaction with the adenine ring of SAM" evidence="1">
    <location>
        <position position="17"/>
    </location>
</feature>
<feature type="modified residue" description="N6-(pyridoxal phosphate)lysine" evidence="1">
    <location>
        <position position="274"/>
    </location>
</feature>
<dbReference type="EC" id="2.6.1.62" evidence="1"/>
<dbReference type="EMBL" id="AE013218">
    <property type="protein sequence ID" value="AAM67838.1"/>
    <property type="molecule type" value="Genomic_DNA"/>
</dbReference>
<dbReference type="RefSeq" id="WP_011053805.1">
    <property type="nucleotide sequence ID" value="NC_004061.1"/>
</dbReference>
<dbReference type="SMR" id="Q8K9P0"/>
<dbReference type="STRING" id="198804.BUsg_281"/>
<dbReference type="GeneID" id="93003751"/>
<dbReference type="KEGG" id="bas:BUsg_281"/>
<dbReference type="eggNOG" id="COG0161">
    <property type="taxonomic scope" value="Bacteria"/>
</dbReference>
<dbReference type="HOGENOM" id="CLU_016922_4_3_6"/>
<dbReference type="UniPathway" id="UPA00078">
    <property type="reaction ID" value="UER00160"/>
</dbReference>
<dbReference type="Proteomes" id="UP000000416">
    <property type="component" value="Chromosome"/>
</dbReference>
<dbReference type="GO" id="GO:0005737">
    <property type="term" value="C:cytoplasm"/>
    <property type="evidence" value="ECO:0007669"/>
    <property type="project" value="UniProtKB-SubCell"/>
</dbReference>
<dbReference type="GO" id="GO:0004015">
    <property type="term" value="F:adenosylmethionine-8-amino-7-oxononanoate transaminase activity"/>
    <property type="evidence" value="ECO:0007669"/>
    <property type="project" value="UniProtKB-UniRule"/>
</dbReference>
<dbReference type="GO" id="GO:0030170">
    <property type="term" value="F:pyridoxal phosphate binding"/>
    <property type="evidence" value="ECO:0007669"/>
    <property type="project" value="UniProtKB-UniRule"/>
</dbReference>
<dbReference type="GO" id="GO:0009102">
    <property type="term" value="P:biotin biosynthetic process"/>
    <property type="evidence" value="ECO:0007669"/>
    <property type="project" value="UniProtKB-UniRule"/>
</dbReference>
<dbReference type="CDD" id="cd00610">
    <property type="entry name" value="OAT_like"/>
    <property type="match status" value="1"/>
</dbReference>
<dbReference type="FunFam" id="3.40.640.10:FF:000041">
    <property type="entry name" value="Adenosylmethionine-8-amino-7-oxononanoate aminotransferase"/>
    <property type="match status" value="1"/>
</dbReference>
<dbReference type="Gene3D" id="3.90.1150.10">
    <property type="entry name" value="Aspartate Aminotransferase, domain 1"/>
    <property type="match status" value="1"/>
</dbReference>
<dbReference type="Gene3D" id="3.40.640.10">
    <property type="entry name" value="Type I PLP-dependent aspartate aminotransferase-like (Major domain)"/>
    <property type="match status" value="1"/>
</dbReference>
<dbReference type="HAMAP" id="MF_00834">
    <property type="entry name" value="BioA"/>
    <property type="match status" value="1"/>
</dbReference>
<dbReference type="InterPro" id="IPR005814">
    <property type="entry name" value="Aminotrans_3"/>
</dbReference>
<dbReference type="InterPro" id="IPR049704">
    <property type="entry name" value="Aminotrans_3_PPA_site"/>
</dbReference>
<dbReference type="InterPro" id="IPR005815">
    <property type="entry name" value="BioA"/>
</dbReference>
<dbReference type="InterPro" id="IPR015424">
    <property type="entry name" value="PyrdxlP-dep_Trfase"/>
</dbReference>
<dbReference type="InterPro" id="IPR015421">
    <property type="entry name" value="PyrdxlP-dep_Trfase_major"/>
</dbReference>
<dbReference type="InterPro" id="IPR015422">
    <property type="entry name" value="PyrdxlP-dep_Trfase_small"/>
</dbReference>
<dbReference type="NCBIfam" id="TIGR00508">
    <property type="entry name" value="bioA"/>
    <property type="match status" value="1"/>
</dbReference>
<dbReference type="NCBIfam" id="NF004624">
    <property type="entry name" value="PRK05964.1"/>
    <property type="match status" value="1"/>
</dbReference>
<dbReference type="NCBIfam" id="NF005940">
    <property type="entry name" value="PRK07986.1"/>
    <property type="match status" value="1"/>
</dbReference>
<dbReference type="PANTHER" id="PTHR42684">
    <property type="entry name" value="ADENOSYLMETHIONINE-8-AMINO-7-OXONONANOATE AMINOTRANSFERASE"/>
    <property type="match status" value="1"/>
</dbReference>
<dbReference type="PANTHER" id="PTHR42684:SF17">
    <property type="entry name" value="ADENOSYLMETHIONINE-8-AMINO-7-OXONONANOATE AMINOTRANSFERASE"/>
    <property type="match status" value="1"/>
</dbReference>
<dbReference type="Pfam" id="PF00202">
    <property type="entry name" value="Aminotran_3"/>
    <property type="match status" value="1"/>
</dbReference>
<dbReference type="SUPFAM" id="SSF53383">
    <property type="entry name" value="PLP-dependent transferases"/>
    <property type="match status" value="1"/>
</dbReference>
<dbReference type="PROSITE" id="PS00600">
    <property type="entry name" value="AA_TRANSFER_CLASS_3"/>
    <property type="match status" value="1"/>
</dbReference>